<sequence length="226" mass="24088">MVDKTSVAAEIAEPERRKVFRKVFRQLGAATVITMFGKAVLDSRPARAASVLRPPGALPEPEFNAACIRCGLCVEACPLDILHLASWSDPAPTGTPYFVGRTDPCRMCPDIPCARACPTGALSPLLTDIKKADMGVAVLVGHETCLNYKGLTCSICVRVCPIIGEAISLKQIKNERGVLQIPTVDSSKCTGCGTCEKHCVLSEAAIRLLPRELGLGVEGAQSVGRW</sequence>
<organism>
    <name type="scientific">Methylophilus methylotrophus</name>
    <name type="common">Bacterium W3A1</name>
    <dbReference type="NCBI Taxonomy" id="17"/>
    <lineage>
        <taxon>Bacteria</taxon>
        <taxon>Pseudomonadati</taxon>
        <taxon>Pseudomonadota</taxon>
        <taxon>Betaproteobacteria</taxon>
        <taxon>Nitrosomonadales</taxon>
        <taxon>Methylophilaceae</taxon>
        <taxon>Methylophilus</taxon>
    </lineage>
</organism>
<gene>
    <name type="primary">mauM</name>
</gene>
<feature type="chain" id="PRO_0000159287" description="Methylamine utilization ferredoxin-type protein MauM">
    <location>
        <begin position="1"/>
        <end position="226"/>
    </location>
</feature>
<feature type="domain" description="4Fe-4S ferredoxin-type 1" evidence="2">
    <location>
        <begin position="59"/>
        <end position="87"/>
    </location>
</feature>
<feature type="domain" description="4Fe-4S ferredoxin-type 2" evidence="2">
    <location>
        <begin position="95"/>
        <end position="127"/>
    </location>
</feature>
<feature type="domain" description="4Fe-4S ferredoxin-type 3" evidence="2">
    <location>
        <begin position="136"/>
        <end position="172"/>
    </location>
</feature>
<feature type="domain" description="4Fe-4S ferredoxin-type 4" evidence="2">
    <location>
        <begin position="180"/>
        <end position="211"/>
    </location>
</feature>
<feature type="binding site" evidence="1">
    <location>
        <position position="67"/>
    </location>
    <ligand>
        <name>[4Fe-4S] cluster</name>
        <dbReference type="ChEBI" id="CHEBI:49883"/>
        <label>1</label>
    </ligand>
</feature>
<feature type="binding site" evidence="1">
    <location>
        <position position="70"/>
    </location>
    <ligand>
        <name>[4Fe-4S] cluster</name>
        <dbReference type="ChEBI" id="CHEBI:49883"/>
        <label>1</label>
    </ligand>
</feature>
<feature type="binding site" evidence="1">
    <location>
        <position position="73"/>
    </location>
    <ligand>
        <name>[4Fe-4S] cluster</name>
        <dbReference type="ChEBI" id="CHEBI:49883"/>
        <label>1</label>
    </ligand>
</feature>
<feature type="binding site" evidence="1">
    <location>
        <position position="77"/>
    </location>
    <ligand>
        <name>[4Fe-4S] cluster</name>
        <dbReference type="ChEBI" id="CHEBI:49883"/>
        <label>1</label>
    </ligand>
</feature>
<feature type="binding site" evidence="1">
    <location>
        <position position="105"/>
    </location>
    <ligand>
        <name>[4Fe-4S] cluster</name>
        <dbReference type="ChEBI" id="CHEBI:49883"/>
        <label>2</label>
    </ligand>
</feature>
<feature type="binding site" evidence="1">
    <location>
        <position position="108"/>
    </location>
    <ligand>
        <name>[4Fe-4S] cluster</name>
        <dbReference type="ChEBI" id="CHEBI:49883"/>
        <label>2</label>
    </ligand>
</feature>
<feature type="binding site" evidence="1">
    <location>
        <position position="113"/>
    </location>
    <ligand>
        <name>[4Fe-4S] cluster</name>
        <dbReference type="ChEBI" id="CHEBI:49883"/>
        <label>2</label>
    </ligand>
</feature>
<feature type="binding site" evidence="1">
    <location>
        <position position="117"/>
    </location>
    <ligand>
        <name>[4Fe-4S] cluster</name>
        <dbReference type="ChEBI" id="CHEBI:49883"/>
        <label>2</label>
    </ligand>
</feature>
<feature type="binding site" evidence="1">
    <location>
        <position position="145"/>
    </location>
    <ligand>
        <name>[4Fe-4S] cluster</name>
        <dbReference type="ChEBI" id="CHEBI:49883"/>
        <label>3</label>
    </ligand>
</feature>
<feature type="binding site" evidence="1">
    <location>
        <position position="153"/>
    </location>
    <ligand>
        <name>[4Fe-4S] cluster</name>
        <dbReference type="ChEBI" id="CHEBI:49883"/>
        <label>3</label>
    </ligand>
</feature>
<feature type="binding site" evidence="1">
    <location>
        <position position="156"/>
    </location>
    <ligand>
        <name>[4Fe-4S] cluster</name>
        <dbReference type="ChEBI" id="CHEBI:49883"/>
        <label>3</label>
    </ligand>
</feature>
<feature type="binding site" evidence="1">
    <location>
        <position position="160"/>
    </location>
    <ligand>
        <name>[4Fe-4S] cluster</name>
        <dbReference type="ChEBI" id="CHEBI:49883"/>
        <label>3</label>
    </ligand>
</feature>
<feature type="binding site" evidence="1">
    <location>
        <position position="189"/>
    </location>
    <ligand>
        <name>[4Fe-4S] cluster</name>
        <dbReference type="ChEBI" id="CHEBI:49883"/>
        <label>4</label>
    </ligand>
</feature>
<feature type="binding site" evidence="1">
    <location>
        <position position="192"/>
    </location>
    <ligand>
        <name>[4Fe-4S] cluster</name>
        <dbReference type="ChEBI" id="CHEBI:49883"/>
        <label>4</label>
    </ligand>
</feature>
<feature type="binding site" evidence="1">
    <location>
        <position position="195"/>
    </location>
    <ligand>
        <name>[4Fe-4S] cluster</name>
        <dbReference type="ChEBI" id="CHEBI:49883"/>
        <label>4</label>
    </ligand>
</feature>
<feature type="binding site" evidence="1">
    <location>
        <position position="199"/>
    </location>
    <ligand>
        <name>[4Fe-4S] cluster</name>
        <dbReference type="ChEBI" id="CHEBI:49883"/>
        <label>4</label>
    </ligand>
</feature>
<evidence type="ECO:0000250" key="1"/>
<evidence type="ECO:0000255" key="2">
    <source>
        <dbReference type="PROSITE-ProRule" id="PRU00711"/>
    </source>
</evidence>
<evidence type="ECO:0000305" key="3"/>
<name>MAUM_METME</name>
<protein>
    <recommendedName>
        <fullName>Methylamine utilization ferredoxin-type protein MauM</fullName>
    </recommendedName>
</protein>
<keyword id="KW-0004">4Fe-4S</keyword>
<keyword id="KW-0249">Electron transport</keyword>
<keyword id="KW-0408">Iron</keyword>
<keyword id="KW-0411">Iron-sulfur</keyword>
<keyword id="KW-0479">Metal-binding</keyword>
<keyword id="KW-0677">Repeat</keyword>
<keyword id="KW-0813">Transport</keyword>
<proteinExistence type="predicted"/>
<accession>Q50235</accession>
<comment type="function">
    <text evidence="3">Involved in electron transfer.</text>
</comment>
<comment type="pathway">
    <text>One-carbon metabolism; methylamine degradation.</text>
</comment>
<reference key="1">
    <citation type="journal article" date="1994" name="J. Bacteriol.">
        <title>Organization of the methylamine utilization (mau) genes in Methylophilus methylotrophus W3A1-NS.</title>
        <authorList>
            <person name="Chistoserdov A.Y."/>
            <person name="McIntire W.S."/>
            <person name="Mathews F.S."/>
            <person name="Lidstrom M.E."/>
        </authorList>
    </citation>
    <scope>NUCLEOTIDE SEQUENCE [GENOMIC DNA]</scope>
    <source>
        <strain>W3A1</strain>
    </source>
</reference>
<dbReference type="EMBL" id="L26407">
    <property type="protein sequence ID" value="AAB46954.1"/>
    <property type="molecule type" value="Genomic_DNA"/>
</dbReference>
<dbReference type="PIR" id="T10076">
    <property type="entry name" value="T10076"/>
</dbReference>
<dbReference type="STRING" id="1122236.GCA_000378225_02086"/>
<dbReference type="UniPathway" id="UPA00895"/>
<dbReference type="GO" id="GO:0051539">
    <property type="term" value="F:4 iron, 4 sulfur cluster binding"/>
    <property type="evidence" value="ECO:0007669"/>
    <property type="project" value="UniProtKB-KW"/>
</dbReference>
<dbReference type="GO" id="GO:0046872">
    <property type="term" value="F:metal ion binding"/>
    <property type="evidence" value="ECO:0007669"/>
    <property type="project" value="UniProtKB-KW"/>
</dbReference>
<dbReference type="CDD" id="cd16373">
    <property type="entry name" value="DMSOR_beta_like"/>
    <property type="match status" value="1"/>
</dbReference>
<dbReference type="Gene3D" id="3.30.70.20">
    <property type="match status" value="2"/>
</dbReference>
<dbReference type="InterPro" id="IPR017896">
    <property type="entry name" value="4Fe4S_Fe-S-bd"/>
</dbReference>
<dbReference type="InterPro" id="IPR017900">
    <property type="entry name" value="4Fe4S_Fe_S_CS"/>
</dbReference>
<dbReference type="InterPro" id="IPR004494">
    <property type="entry name" value="MauM_NapG"/>
</dbReference>
<dbReference type="NCBIfam" id="TIGR00397">
    <property type="entry name" value="mauM_napG"/>
    <property type="match status" value="1"/>
</dbReference>
<dbReference type="NCBIfam" id="NF007012">
    <property type="entry name" value="PRK09476.1"/>
    <property type="match status" value="1"/>
</dbReference>
<dbReference type="Pfam" id="PF12838">
    <property type="entry name" value="Fer4_7"/>
    <property type="match status" value="2"/>
</dbReference>
<dbReference type="SUPFAM" id="SSF54862">
    <property type="entry name" value="4Fe-4S ferredoxins"/>
    <property type="match status" value="1"/>
</dbReference>
<dbReference type="PROSITE" id="PS00198">
    <property type="entry name" value="4FE4S_FER_1"/>
    <property type="match status" value="1"/>
</dbReference>
<dbReference type="PROSITE" id="PS51379">
    <property type="entry name" value="4FE4S_FER_2"/>
    <property type="match status" value="4"/>
</dbReference>